<name>MRAZ_BURVG</name>
<gene>
    <name evidence="1" type="primary">mraZ</name>
    <name type="ordered locus">Bcep1808_0526</name>
</gene>
<accession>A4JB85</accession>
<reference key="1">
    <citation type="submission" date="2007-03" db="EMBL/GenBank/DDBJ databases">
        <title>Complete sequence of chromosome 1 of Burkholderia vietnamiensis G4.</title>
        <authorList>
            <consortium name="US DOE Joint Genome Institute"/>
            <person name="Copeland A."/>
            <person name="Lucas S."/>
            <person name="Lapidus A."/>
            <person name="Barry K."/>
            <person name="Detter J.C."/>
            <person name="Glavina del Rio T."/>
            <person name="Hammon N."/>
            <person name="Israni S."/>
            <person name="Dalin E."/>
            <person name="Tice H."/>
            <person name="Pitluck S."/>
            <person name="Chain P."/>
            <person name="Malfatti S."/>
            <person name="Shin M."/>
            <person name="Vergez L."/>
            <person name="Schmutz J."/>
            <person name="Larimer F."/>
            <person name="Land M."/>
            <person name="Hauser L."/>
            <person name="Kyrpides N."/>
            <person name="Tiedje J."/>
            <person name="Richardson P."/>
        </authorList>
    </citation>
    <scope>NUCLEOTIDE SEQUENCE [LARGE SCALE GENOMIC DNA]</scope>
    <source>
        <strain>G4 / LMG 22486</strain>
    </source>
</reference>
<organism>
    <name type="scientific">Burkholderia vietnamiensis (strain G4 / LMG 22486)</name>
    <name type="common">Burkholderia cepacia (strain R1808)</name>
    <dbReference type="NCBI Taxonomy" id="269482"/>
    <lineage>
        <taxon>Bacteria</taxon>
        <taxon>Pseudomonadati</taxon>
        <taxon>Pseudomonadota</taxon>
        <taxon>Betaproteobacteria</taxon>
        <taxon>Burkholderiales</taxon>
        <taxon>Burkholderiaceae</taxon>
        <taxon>Burkholderia</taxon>
        <taxon>Burkholderia cepacia complex</taxon>
    </lineage>
</organism>
<sequence>MFQGASALTLDAKGRMSVPARYREALQGQAEGRVTVTKHPDGCLLLFPRPEWEVFRAKIAALPMDAHWWRRIFLGNAMDVDLDSAGRILVSPELRMAAGLEKEVMLLGMGSHFELWDSQTYIAKEQAAMAQGMPDALKNFTF</sequence>
<proteinExistence type="inferred from homology"/>
<protein>
    <recommendedName>
        <fullName>Transcriptional regulator MraZ</fullName>
    </recommendedName>
</protein>
<keyword id="KW-0963">Cytoplasm</keyword>
<keyword id="KW-0238">DNA-binding</keyword>
<keyword id="KW-0677">Repeat</keyword>
<keyword id="KW-0804">Transcription</keyword>
<keyword id="KW-0805">Transcription regulation</keyword>
<evidence type="ECO:0000255" key="1">
    <source>
        <dbReference type="HAMAP-Rule" id="MF_01008"/>
    </source>
</evidence>
<evidence type="ECO:0000255" key="2">
    <source>
        <dbReference type="PROSITE-ProRule" id="PRU01076"/>
    </source>
</evidence>
<feature type="chain" id="PRO_1000062859" description="Transcriptional regulator MraZ">
    <location>
        <begin position="1"/>
        <end position="142"/>
    </location>
</feature>
<feature type="domain" description="SpoVT-AbrB 1" evidence="2">
    <location>
        <begin position="5"/>
        <end position="51"/>
    </location>
</feature>
<feature type="domain" description="SpoVT-AbrB 2" evidence="2">
    <location>
        <begin position="77"/>
        <end position="120"/>
    </location>
</feature>
<comment type="subunit">
    <text evidence="1">Forms oligomers.</text>
</comment>
<comment type="subcellular location">
    <subcellularLocation>
        <location evidence="1">Cytoplasm</location>
        <location evidence="1">Nucleoid</location>
    </subcellularLocation>
</comment>
<comment type="similarity">
    <text evidence="1">Belongs to the MraZ family.</text>
</comment>
<dbReference type="EMBL" id="CP000614">
    <property type="protein sequence ID" value="ABO53538.1"/>
    <property type="molecule type" value="Genomic_DNA"/>
</dbReference>
<dbReference type="SMR" id="A4JB85"/>
<dbReference type="KEGG" id="bvi:Bcep1808_0526"/>
<dbReference type="eggNOG" id="COG2001">
    <property type="taxonomic scope" value="Bacteria"/>
</dbReference>
<dbReference type="HOGENOM" id="CLU_107907_2_1_4"/>
<dbReference type="Proteomes" id="UP000002287">
    <property type="component" value="Chromosome 1"/>
</dbReference>
<dbReference type="GO" id="GO:0005737">
    <property type="term" value="C:cytoplasm"/>
    <property type="evidence" value="ECO:0007669"/>
    <property type="project" value="UniProtKB-UniRule"/>
</dbReference>
<dbReference type="GO" id="GO:0009295">
    <property type="term" value="C:nucleoid"/>
    <property type="evidence" value="ECO:0007669"/>
    <property type="project" value="UniProtKB-SubCell"/>
</dbReference>
<dbReference type="GO" id="GO:0003700">
    <property type="term" value="F:DNA-binding transcription factor activity"/>
    <property type="evidence" value="ECO:0007669"/>
    <property type="project" value="UniProtKB-UniRule"/>
</dbReference>
<dbReference type="GO" id="GO:0000976">
    <property type="term" value="F:transcription cis-regulatory region binding"/>
    <property type="evidence" value="ECO:0007669"/>
    <property type="project" value="TreeGrafter"/>
</dbReference>
<dbReference type="GO" id="GO:2000143">
    <property type="term" value="P:negative regulation of DNA-templated transcription initiation"/>
    <property type="evidence" value="ECO:0007669"/>
    <property type="project" value="TreeGrafter"/>
</dbReference>
<dbReference type="CDD" id="cd16321">
    <property type="entry name" value="MraZ_C"/>
    <property type="match status" value="1"/>
</dbReference>
<dbReference type="CDD" id="cd16320">
    <property type="entry name" value="MraZ_N"/>
    <property type="match status" value="1"/>
</dbReference>
<dbReference type="Gene3D" id="3.40.1550.20">
    <property type="entry name" value="Transcriptional regulator MraZ domain"/>
    <property type="match status" value="1"/>
</dbReference>
<dbReference type="HAMAP" id="MF_01008">
    <property type="entry name" value="MraZ"/>
    <property type="match status" value="1"/>
</dbReference>
<dbReference type="InterPro" id="IPR003444">
    <property type="entry name" value="MraZ"/>
</dbReference>
<dbReference type="InterPro" id="IPR035644">
    <property type="entry name" value="MraZ_C"/>
</dbReference>
<dbReference type="InterPro" id="IPR020603">
    <property type="entry name" value="MraZ_dom"/>
</dbReference>
<dbReference type="InterPro" id="IPR035642">
    <property type="entry name" value="MraZ_N"/>
</dbReference>
<dbReference type="InterPro" id="IPR038619">
    <property type="entry name" value="MraZ_sf"/>
</dbReference>
<dbReference type="InterPro" id="IPR007159">
    <property type="entry name" value="SpoVT-AbrB_dom"/>
</dbReference>
<dbReference type="InterPro" id="IPR037914">
    <property type="entry name" value="SpoVT-AbrB_sf"/>
</dbReference>
<dbReference type="NCBIfam" id="TIGR00242">
    <property type="entry name" value="division/cell wall cluster transcriptional repressor MraZ"/>
    <property type="match status" value="1"/>
</dbReference>
<dbReference type="PANTHER" id="PTHR34701">
    <property type="entry name" value="TRANSCRIPTIONAL REGULATOR MRAZ"/>
    <property type="match status" value="1"/>
</dbReference>
<dbReference type="PANTHER" id="PTHR34701:SF1">
    <property type="entry name" value="TRANSCRIPTIONAL REGULATOR MRAZ"/>
    <property type="match status" value="1"/>
</dbReference>
<dbReference type="Pfam" id="PF02381">
    <property type="entry name" value="MraZ"/>
    <property type="match status" value="2"/>
</dbReference>
<dbReference type="SUPFAM" id="SSF89447">
    <property type="entry name" value="AbrB/MazE/MraZ-like"/>
    <property type="match status" value="1"/>
</dbReference>
<dbReference type="PROSITE" id="PS51740">
    <property type="entry name" value="SPOVT_ABRB"/>
    <property type="match status" value="2"/>
</dbReference>